<feature type="chain" id="PRO_0000048658" description="Sex-determining region Y protein">
    <location>
        <begin position="1"/>
        <end position="201"/>
    </location>
</feature>
<feature type="DNA-binding region" description="HMG box" evidence="3">
    <location>
        <begin position="54"/>
        <end position="122"/>
    </location>
</feature>
<feature type="region of interest" description="Disordered" evidence="4">
    <location>
        <begin position="162"/>
        <end position="201"/>
    </location>
</feature>
<feature type="compositionally biased region" description="Polar residues" evidence="4">
    <location>
        <begin position="186"/>
        <end position="195"/>
    </location>
</feature>
<evidence type="ECO:0000250" key="1">
    <source>
        <dbReference type="UniProtKB" id="P36394"/>
    </source>
</evidence>
<evidence type="ECO:0000250" key="2">
    <source>
        <dbReference type="UniProtKB" id="Q05066"/>
    </source>
</evidence>
<evidence type="ECO:0000255" key="3">
    <source>
        <dbReference type="PROSITE-ProRule" id="PRU00267"/>
    </source>
</evidence>
<evidence type="ECO:0000256" key="4">
    <source>
        <dbReference type="SAM" id="MobiDB-lite"/>
    </source>
</evidence>
<evidence type="ECO:0000305" key="5"/>
<protein>
    <recommendedName>
        <fullName>Sex-determining region Y protein</fullName>
    </recommendedName>
    <alternativeName>
        <fullName>Testis-determining factor</fullName>
    </alternativeName>
</protein>
<gene>
    <name type="primary">SRY</name>
    <name type="synonym">TDF</name>
</gene>
<name>SRY_DELDE</name>
<accession>Q864P9</accession>
<reference key="1">
    <citation type="journal article" date="2003" name="Mammal Study">
        <title>SRY gene structure and phylogeny in the cetacean species.</title>
        <authorList>
            <person name="Nishida S."/>
            <person name="Pastene L.A."/>
            <person name="Goto M."/>
            <person name="Koike H."/>
        </authorList>
    </citation>
    <scope>NUCLEOTIDE SEQUENCE [GENOMIC DNA]</scope>
</reference>
<comment type="function">
    <text evidence="1 2">Transcriptional regulator that controls a genetic switch in male development. It is necessary and sufficient for initiating male sex determination by directing the development of supporting cell precursors (pre-Sertoli cells) as Sertoli rather than granulosa cells. Involved in different aspects of gene regulation including promoter activation or repression. Binds to the DNA consensus sequence 5'-[AT]AACAA[AT]-3'. SRY HMG box recognizes DNA by partial intercalation in the minor groove and promotes DNA bending. Also involved in pre-mRNA splicing (By similarity). In male adult brain involved in the maintenance of motor functions of dopaminergic neurons (By similarity).</text>
</comment>
<comment type="subunit">
    <text evidence="2">Interacts with CALM, EP300, HDAC3, KPNB1, ZNF208 isoform KRAB-O, PARP1, SLC9A3R2 and WT1. The interaction with EP300 modulates its DNA-binding activity. The interaction with KPNB1 is sensitive to dissociation by Ran in the GTP-bound form. Interaction with PARP1 impaired its DNA-binding activity.</text>
</comment>
<comment type="subcellular location">
    <subcellularLocation>
        <location evidence="2">Nucleus speckle</location>
    </subcellularLocation>
    <subcellularLocation>
        <location evidence="2">Cytoplasm</location>
    </subcellularLocation>
    <subcellularLocation>
        <location evidence="2">Nucleus</location>
    </subcellularLocation>
</comment>
<comment type="similarity">
    <text evidence="5">Belongs to the SRY family.</text>
</comment>
<comment type="online information" name="Protein Spotlight">
    <link uri="https://www.proteinspotlight.org/back_issues/080"/>
    <text>The tenuous nature of sex - Issue 80 of March 2007</text>
</comment>
<keyword id="KW-0010">Activator</keyword>
<keyword id="KW-0112">Calmodulin-binding</keyword>
<keyword id="KW-0963">Cytoplasm</keyword>
<keyword id="KW-0221">Differentiation</keyword>
<keyword id="KW-0238">DNA-binding</keyword>
<keyword id="KW-0539">Nucleus</keyword>
<keyword id="KW-0678">Repressor</keyword>
<keyword id="KW-0726">Sexual differentiation</keyword>
<keyword id="KW-0804">Transcription</keyword>
<keyword id="KW-0805">Transcription regulation</keyword>
<sequence length="201" mass="23096">MFRTVNGEDYSPAVQQRNILDFGKAHSLLWTDNGSANDRCETGGNCRESGQDRVKRPMNAFIVWSRDQRRKVALENPQMQNSEISKRLGYDWKMLTEAEKQPFFEEAQRLRAMHRDKYPGYKYRPRRKAKEATEIASRRLFSTVQPNAHRGDVVPLPIQGRLRQGHTFTNGKPVKPLTAHEHKQLTPATGASQQLDKPAPQ</sequence>
<organism>
    <name type="scientific">Delphinus delphis</name>
    <name type="common">Short-beaked common dolphin</name>
    <dbReference type="NCBI Taxonomy" id="9728"/>
    <lineage>
        <taxon>Eukaryota</taxon>
        <taxon>Metazoa</taxon>
        <taxon>Chordata</taxon>
        <taxon>Craniata</taxon>
        <taxon>Vertebrata</taxon>
        <taxon>Euteleostomi</taxon>
        <taxon>Mammalia</taxon>
        <taxon>Eutheria</taxon>
        <taxon>Laurasiatheria</taxon>
        <taxon>Artiodactyla</taxon>
        <taxon>Whippomorpha</taxon>
        <taxon>Cetacea</taxon>
        <taxon>Odontoceti</taxon>
        <taxon>Delphinidae</taxon>
        <taxon>Delphinus</taxon>
    </lineage>
</organism>
<dbReference type="EMBL" id="AB108522">
    <property type="protein sequence ID" value="BAC75654.1"/>
    <property type="molecule type" value="Genomic_DNA"/>
</dbReference>
<dbReference type="SMR" id="Q864P9"/>
<dbReference type="GO" id="GO:0005737">
    <property type="term" value="C:cytoplasm"/>
    <property type="evidence" value="ECO:0007669"/>
    <property type="project" value="UniProtKB-SubCell"/>
</dbReference>
<dbReference type="GO" id="GO:0016607">
    <property type="term" value="C:nuclear speck"/>
    <property type="evidence" value="ECO:0007669"/>
    <property type="project" value="UniProtKB-SubCell"/>
</dbReference>
<dbReference type="GO" id="GO:0005634">
    <property type="term" value="C:nucleus"/>
    <property type="evidence" value="ECO:0000250"/>
    <property type="project" value="UniProtKB"/>
</dbReference>
<dbReference type="GO" id="GO:0005516">
    <property type="term" value="F:calmodulin binding"/>
    <property type="evidence" value="ECO:0007669"/>
    <property type="project" value="UniProtKB-KW"/>
</dbReference>
<dbReference type="GO" id="GO:0001228">
    <property type="term" value="F:DNA-binding transcription activator activity, RNA polymerase II-specific"/>
    <property type="evidence" value="ECO:0007669"/>
    <property type="project" value="TreeGrafter"/>
</dbReference>
<dbReference type="GO" id="GO:0000978">
    <property type="term" value="F:RNA polymerase II cis-regulatory region sequence-specific DNA binding"/>
    <property type="evidence" value="ECO:0007669"/>
    <property type="project" value="TreeGrafter"/>
</dbReference>
<dbReference type="GO" id="GO:0030154">
    <property type="term" value="P:cell differentiation"/>
    <property type="evidence" value="ECO:0007669"/>
    <property type="project" value="UniProtKB-KW"/>
</dbReference>
<dbReference type="GO" id="GO:0030238">
    <property type="term" value="P:male sex determination"/>
    <property type="evidence" value="ECO:0007669"/>
    <property type="project" value="InterPro"/>
</dbReference>
<dbReference type="GO" id="GO:0007548">
    <property type="term" value="P:sex differentiation"/>
    <property type="evidence" value="ECO:0007669"/>
    <property type="project" value="UniProtKB-KW"/>
</dbReference>
<dbReference type="CDD" id="cd22034">
    <property type="entry name" value="HMG-box_SoxA_SRY"/>
    <property type="match status" value="1"/>
</dbReference>
<dbReference type="FunFam" id="1.10.30.10:FF:000002">
    <property type="entry name" value="transcription factor Sox-2"/>
    <property type="match status" value="1"/>
</dbReference>
<dbReference type="Gene3D" id="1.10.30.10">
    <property type="entry name" value="High mobility group box domain"/>
    <property type="match status" value="1"/>
</dbReference>
<dbReference type="InterPro" id="IPR009071">
    <property type="entry name" value="HMG_box_dom"/>
</dbReference>
<dbReference type="InterPro" id="IPR036910">
    <property type="entry name" value="HMG_box_dom_sf"/>
</dbReference>
<dbReference type="InterPro" id="IPR017253">
    <property type="entry name" value="SRY"/>
</dbReference>
<dbReference type="InterPro" id="IPR050140">
    <property type="entry name" value="SRY-related_HMG-box_TF-like"/>
</dbReference>
<dbReference type="PANTHER" id="PTHR10270:SF161">
    <property type="entry name" value="SEX-DETERMINING REGION Y PROTEIN"/>
    <property type="match status" value="1"/>
</dbReference>
<dbReference type="PANTHER" id="PTHR10270">
    <property type="entry name" value="SOX TRANSCRIPTION FACTOR"/>
    <property type="match status" value="1"/>
</dbReference>
<dbReference type="Pfam" id="PF00505">
    <property type="entry name" value="HMG_box"/>
    <property type="match status" value="1"/>
</dbReference>
<dbReference type="PIRSF" id="PIRSF037653">
    <property type="entry name" value="SRY"/>
    <property type="match status" value="1"/>
</dbReference>
<dbReference type="SMART" id="SM00398">
    <property type="entry name" value="HMG"/>
    <property type="match status" value="1"/>
</dbReference>
<dbReference type="SUPFAM" id="SSF47095">
    <property type="entry name" value="HMG-box"/>
    <property type="match status" value="1"/>
</dbReference>
<dbReference type="PROSITE" id="PS50118">
    <property type="entry name" value="HMG_BOX_2"/>
    <property type="match status" value="1"/>
</dbReference>
<proteinExistence type="inferred from homology"/>